<comment type="function">
    <text evidence="1">With S4 and S5 plays an important role in translational accuracy. Located at the interface of the 30S and 50S subunits (By similarity).</text>
</comment>
<comment type="subunit">
    <text evidence="1">Part of the 30S ribosomal subunit.</text>
</comment>
<comment type="subcellular location">
    <subcellularLocation>
        <location>Plastid</location>
        <location>Chloroplast</location>
    </subcellularLocation>
</comment>
<comment type="similarity">
    <text evidence="3">Belongs to the universal ribosomal protein uS12 family.</text>
</comment>
<accession>Q8W8R9</accession>
<feature type="chain" id="PRO_0000146423" description="Small ribosomal subunit protein uS12cz/uS12cy">
    <location>
        <begin position="1"/>
        <end position="123"/>
    </location>
</feature>
<protein>
    <recommendedName>
        <fullName evidence="2">Small ribosomal subunit protein uS12cz/uS12cy</fullName>
    </recommendedName>
    <alternativeName>
        <fullName evidence="3">30S ribosomal protein S12, chloroplastic</fullName>
    </alternativeName>
</protein>
<geneLocation type="chloroplast"/>
<gene>
    <name type="primary">rps12-A</name>
</gene>
<gene>
    <name type="primary">rps12-B</name>
</gene>
<proteinExistence type="inferred from homology"/>
<organism>
    <name type="scientific">Psilotum nudum</name>
    <name type="common">Whisk fern</name>
    <name type="synonym">Lycopodium nudum</name>
    <dbReference type="NCBI Taxonomy" id="3240"/>
    <lineage>
        <taxon>Eukaryota</taxon>
        <taxon>Viridiplantae</taxon>
        <taxon>Streptophyta</taxon>
        <taxon>Embryophyta</taxon>
        <taxon>Tracheophyta</taxon>
        <taxon>Polypodiopsida</taxon>
        <taxon>Ophioglossidae</taxon>
        <taxon>Psilotales</taxon>
        <taxon>Psilotaceae</taxon>
        <taxon>Psilotum</taxon>
    </lineage>
</organism>
<sequence>MPTIQQLIRNARQPIRSRTKSPALRGCPQRRGVCIRVYTTTPKKPNSALRKVARVRLTSGFEITAYIPGIGHNLQEHSVVSVRGGRVKDLPGVRYHIVRGTLDAVGVKDRKQGRSRYGVKKPK</sequence>
<evidence type="ECO:0000250" key="1"/>
<evidence type="ECO:0000255" key="2">
    <source>
        <dbReference type="HAMAP-Rule" id="MF_00403"/>
    </source>
</evidence>
<evidence type="ECO:0000305" key="3"/>
<keyword id="KW-0150">Chloroplast</keyword>
<keyword id="KW-0934">Plastid</keyword>
<keyword id="KW-0687">Ribonucleoprotein</keyword>
<keyword id="KW-0689">Ribosomal protein</keyword>
<keyword id="KW-0694">RNA-binding</keyword>
<keyword id="KW-0699">rRNA-binding</keyword>
<reference key="1">
    <citation type="journal article" date="2004" name="Mol. Biol. Evol.">
        <title>Chloroplast phylogeny indicates that bryophytes are monophyletic.</title>
        <authorList>
            <person name="Nishiyama T."/>
            <person name="Wolf P.G."/>
            <person name="Kugita M."/>
            <person name="Sinclair R.B."/>
            <person name="Sugita M."/>
            <person name="Sugiura C."/>
            <person name="Wakasugi T."/>
            <person name="Yamada K."/>
            <person name="Yoshinaga K."/>
            <person name="Yamaguchi K."/>
            <person name="Ueda K."/>
            <person name="Hasebe M."/>
        </authorList>
    </citation>
    <scope>NUCLEOTIDE SEQUENCE [LARGE SCALE GENOMIC DNA]</scope>
    <source>
        <strain>Kingyoku</strain>
    </source>
</reference>
<dbReference type="EMBL" id="AP004638">
    <property type="protein sequence ID" value="BAB84264.1"/>
    <property type="molecule type" value="Genomic_DNA"/>
</dbReference>
<dbReference type="EMBL" id="AP004638">
    <property type="protein sequence ID" value="BAB84240.1"/>
    <property type="molecule type" value="Genomic_DNA"/>
</dbReference>
<dbReference type="SMR" id="Q8W8R9"/>
<dbReference type="GO" id="GO:0009507">
    <property type="term" value="C:chloroplast"/>
    <property type="evidence" value="ECO:0007669"/>
    <property type="project" value="UniProtKB-SubCell"/>
</dbReference>
<dbReference type="GO" id="GO:0015935">
    <property type="term" value="C:small ribosomal subunit"/>
    <property type="evidence" value="ECO:0007669"/>
    <property type="project" value="InterPro"/>
</dbReference>
<dbReference type="GO" id="GO:0019843">
    <property type="term" value="F:rRNA binding"/>
    <property type="evidence" value="ECO:0007669"/>
    <property type="project" value="UniProtKB-UniRule"/>
</dbReference>
<dbReference type="GO" id="GO:0003735">
    <property type="term" value="F:structural constituent of ribosome"/>
    <property type="evidence" value="ECO:0007669"/>
    <property type="project" value="InterPro"/>
</dbReference>
<dbReference type="GO" id="GO:0006412">
    <property type="term" value="P:translation"/>
    <property type="evidence" value="ECO:0007669"/>
    <property type="project" value="UniProtKB-UniRule"/>
</dbReference>
<dbReference type="CDD" id="cd03368">
    <property type="entry name" value="Ribosomal_S12"/>
    <property type="match status" value="1"/>
</dbReference>
<dbReference type="FunFam" id="2.40.50.140:FF:000008">
    <property type="entry name" value="30S ribosomal protein S12, chloroplastic"/>
    <property type="match status" value="1"/>
</dbReference>
<dbReference type="Gene3D" id="2.40.50.140">
    <property type="entry name" value="Nucleic acid-binding proteins"/>
    <property type="match status" value="1"/>
</dbReference>
<dbReference type="HAMAP" id="MF_00403_B">
    <property type="entry name" value="Ribosomal_uS12_B"/>
    <property type="match status" value="1"/>
</dbReference>
<dbReference type="InterPro" id="IPR012340">
    <property type="entry name" value="NA-bd_OB-fold"/>
</dbReference>
<dbReference type="InterPro" id="IPR006032">
    <property type="entry name" value="Ribosomal_uS12"/>
</dbReference>
<dbReference type="InterPro" id="IPR005679">
    <property type="entry name" value="Ribosomal_uS12_bac"/>
</dbReference>
<dbReference type="NCBIfam" id="TIGR00981">
    <property type="entry name" value="rpsL_bact"/>
    <property type="match status" value="1"/>
</dbReference>
<dbReference type="PANTHER" id="PTHR11652">
    <property type="entry name" value="30S RIBOSOMAL PROTEIN S12 FAMILY MEMBER"/>
    <property type="match status" value="1"/>
</dbReference>
<dbReference type="Pfam" id="PF00164">
    <property type="entry name" value="Ribosom_S12_S23"/>
    <property type="match status" value="1"/>
</dbReference>
<dbReference type="PIRSF" id="PIRSF002133">
    <property type="entry name" value="Ribosomal_S12/S23"/>
    <property type="match status" value="1"/>
</dbReference>
<dbReference type="PRINTS" id="PR01034">
    <property type="entry name" value="RIBOSOMALS12"/>
</dbReference>
<dbReference type="SUPFAM" id="SSF50249">
    <property type="entry name" value="Nucleic acid-binding proteins"/>
    <property type="match status" value="1"/>
</dbReference>
<dbReference type="PROSITE" id="PS00055">
    <property type="entry name" value="RIBOSOMAL_S12"/>
    <property type="match status" value="1"/>
</dbReference>
<name>RR12_PSINU</name>